<dbReference type="EC" id="2.7.11.33" evidence="1"/>
<dbReference type="EC" id="2.7.4.28" evidence="1"/>
<dbReference type="EMBL" id="CP001127">
    <property type="protein sequence ID" value="ACF90521.1"/>
    <property type="molecule type" value="Genomic_DNA"/>
</dbReference>
<dbReference type="RefSeq" id="WP_000370992.1">
    <property type="nucleotide sequence ID" value="NC_011094.1"/>
</dbReference>
<dbReference type="SMR" id="B4TUG5"/>
<dbReference type="KEGG" id="sew:SeSA_A1443"/>
<dbReference type="HOGENOM" id="CLU_046206_1_0_6"/>
<dbReference type="Proteomes" id="UP000001865">
    <property type="component" value="Chromosome"/>
</dbReference>
<dbReference type="GO" id="GO:0043531">
    <property type="term" value="F:ADP binding"/>
    <property type="evidence" value="ECO:0007669"/>
    <property type="project" value="UniProtKB-UniRule"/>
</dbReference>
<dbReference type="GO" id="GO:0005524">
    <property type="term" value="F:ATP binding"/>
    <property type="evidence" value="ECO:0007669"/>
    <property type="project" value="InterPro"/>
</dbReference>
<dbReference type="GO" id="GO:0016776">
    <property type="term" value="F:phosphotransferase activity, phosphate group as acceptor"/>
    <property type="evidence" value="ECO:0007669"/>
    <property type="project" value="UniProtKB-UniRule"/>
</dbReference>
<dbReference type="GO" id="GO:0004674">
    <property type="term" value="F:protein serine/threonine kinase activity"/>
    <property type="evidence" value="ECO:0007669"/>
    <property type="project" value="UniProtKB-UniRule"/>
</dbReference>
<dbReference type="HAMAP" id="MF_01062">
    <property type="entry name" value="PSRP"/>
    <property type="match status" value="1"/>
</dbReference>
<dbReference type="InterPro" id="IPR005177">
    <property type="entry name" value="Kinase-pyrophosphorylase"/>
</dbReference>
<dbReference type="InterPro" id="IPR026530">
    <property type="entry name" value="PSRP"/>
</dbReference>
<dbReference type="NCBIfam" id="NF003742">
    <property type="entry name" value="PRK05339.1"/>
    <property type="match status" value="1"/>
</dbReference>
<dbReference type="PANTHER" id="PTHR31756">
    <property type="entry name" value="PYRUVATE, PHOSPHATE DIKINASE REGULATORY PROTEIN 1, CHLOROPLASTIC"/>
    <property type="match status" value="1"/>
</dbReference>
<dbReference type="PANTHER" id="PTHR31756:SF3">
    <property type="entry name" value="PYRUVATE, PHOSPHATE DIKINASE REGULATORY PROTEIN 1, CHLOROPLASTIC"/>
    <property type="match status" value="1"/>
</dbReference>
<dbReference type="Pfam" id="PF03618">
    <property type="entry name" value="Kinase-PPPase"/>
    <property type="match status" value="1"/>
</dbReference>
<gene>
    <name evidence="1" type="primary">ppsR</name>
    <name type="ordered locus">SeSA_A1443</name>
</gene>
<accession>B4TUG5</accession>
<keyword id="KW-0418">Kinase</keyword>
<keyword id="KW-0547">Nucleotide-binding</keyword>
<keyword id="KW-0723">Serine/threonine-protein kinase</keyword>
<keyword id="KW-0808">Transferase</keyword>
<reference key="1">
    <citation type="journal article" date="2011" name="J. Bacteriol.">
        <title>Comparative genomics of 28 Salmonella enterica isolates: evidence for CRISPR-mediated adaptive sublineage evolution.</title>
        <authorList>
            <person name="Fricke W.F."/>
            <person name="Mammel M.K."/>
            <person name="McDermott P.F."/>
            <person name="Tartera C."/>
            <person name="White D.G."/>
            <person name="Leclerc J.E."/>
            <person name="Ravel J."/>
            <person name="Cebula T.A."/>
        </authorList>
    </citation>
    <scope>NUCLEOTIDE SEQUENCE [LARGE SCALE GENOMIC DNA]</scope>
    <source>
        <strain>CVM19633</strain>
    </source>
</reference>
<evidence type="ECO:0000255" key="1">
    <source>
        <dbReference type="HAMAP-Rule" id="MF_01062"/>
    </source>
</evidence>
<feature type="chain" id="PRO_1000136495" description="Phosphoenolpyruvate synthase regulatory protein">
    <location>
        <begin position="1"/>
        <end position="277"/>
    </location>
</feature>
<feature type="binding site" evidence="1">
    <location>
        <begin position="157"/>
        <end position="164"/>
    </location>
    <ligand>
        <name>ADP</name>
        <dbReference type="ChEBI" id="CHEBI:456216"/>
    </ligand>
</feature>
<protein>
    <recommendedName>
        <fullName evidence="1">Phosphoenolpyruvate synthase regulatory protein</fullName>
        <shortName evidence="1">PEP synthase regulatory protein</shortName>
        <shortName evidence="1">PSRP</shortName>
        <ecNumber evidence="1">2.7.11.33</ecNumber>
        <ecNumber evidence="1">2.7.4.28</ecNumber>
    </recommendedName>
    <alternativeName>
        <fullName evidence="1">Pyruvate, water dikinase regulatory protein</fullName>
    </alternativeName>
</protein>
<organism>
    <name type="scientific">Salmonella schwarzengrund (strain CVM19633)</name>
    <dbReference type="NCBI Taxonomy" id="439843"/>
    <lineage>
        <taxon>Bacteria</taxon>
        <taxon>Pseudomonadati</taxon>
        <taxon>Pseudomonadota</taxon>
        <taxon>Gammaproteobacteria</taxon>
        <taxon>Enterobacterales</taxon>
        <taxon>Enterobacteriaceae</taxon>
        <taxon>Salmonella</taxon>
    </lineage>
</organism>
<sequence>MDNVVDRHVFYISDGTAITAEVLGHAVMSQFPVTISSITLPFVENESRARAVKDQIDAIYQQTGVRPLVFYSIVLPEIRAIILQSEGFCQDIVQALVAPLQQEMKLDPTPIAHRTHGLNPGNLNKYDARIAAIDYTLAHDDGISLRNLDQAQVILLGVSRCGKTPTSLYLAMQFGIRAANYPFIADDMDNLTLPTSLKPLQHKLFGLTIDPERLAAIREERRENSRYASLRQCRMEVAEVEALYRKNQIPCLNSTNYSVEEIATKILDIMGLNRRMY</sequence>
<proteinExistence type="inferred from homology"/>
<name>PSRP_SALSV</name>
<comment type="function">
    <text evidence="1">Bifunctional serine/threonine kinase and phosphorylase involved in the regulation of the phosphoenolpyruvate synthase (PEPS) by catalyzing its phosphorylation/dephosphorylation.</text>
</comment>
<comment type="catalytic activity">
    <reaction evidence="1">
        <text>[pyruvate, water dikinase] + ADP = [pyruvate, water dikinase]-phosphate + AMP + H(+)</text>
        <dbReference type="Rhea" id="RHEA:46020"/>
        <dbReference type="Rhea" id="RHEA-COMP:11425"/>
        <dbReference type="Rhea" id="RHEA-COMP:11426"/>
        <dbReference type="ChEBI" id="CHEBI:15378"/>
        <dbReference type="ChEBI" id="CHEBI:43176"/>
        <dbReference type="ChEBI" id="CHEBI:68546"/>
        <dbReference type="ChEBI" id="CHEBI:456215"/>
        <dbReference type="ChEBI" id="CHEBI:456216"/>
        <dbReference type="EC" id="2.7.11.33"/>
    </reaction>
</comment>
<comment type="catalytic activity">
    <reaction evidence="1">
        <text>[pyruvate, water dikinase]-phosphate + phosphate + H(+) = [pyruvate, water dikinase] + diphosphate</text>
        <dbReference type="Rhea" id="RHEA:48580"/>
        <dbReference type="Rhea" id="RHEA-COMP:11425"/>
        <dbReference type="Rhea" id="RHEA-COMP:11426"/>
        <dbReference type="ChEBI" id="CHEBI:15378"/>
        <dbReference type="ChEBI" id="CHEBI:33019"/>
        <dbReference type="ChEBI" id="CHEBI:43176"/>
        <dbReference type="ChEBI" id="CHEBI:43474"/>
        <dbReference type="ChEBI" id="CHEBI:68546"/>
        <dbReference type="EC" id="2.7.4.28"/>
    </reaction>
</comment>
<comment type="similarity">
    <text evidence="1">Belongs to the pyruvate, phosphate/water dikinase regulatory protein family. PSRP subfamily.</text>
</comment>